<name>SPEA_PELPD</name>
<dbReference type="EC" id="4.1.1.19" evidence="1"/>
<dbReference type="EMBL" id="CP000482">
    <property type="protein sequence ID" value="ABL00211.1"/>
    <property type="molecule type" value="Genomic_DNA"/>
</dbReference>
<dbReference type="RefSeq" id="WP_011736464.1">
    <property type="nucleotide sequence ID" value="NC_008609.1"/>
</dbReference>
<dbReference type="SMR" id="A1AS90"/>
<dbReference type="STRING" id="338966.Ppro_2606"/>
<dbReference type="KEGG" id="ppd:Ppro_2606"/>
<dbReference type="eggNOG" id="COG1166">
    <property type="taxonomic scope" value="Bacteria"/>
</dbReference>
<dbReference type="HOGENOM" id="CLU_027243_1_0_7"/>
<dbReference type="OrthoDB" id="9802658at2"/>
<dbReference type="UniPathway" id="UPA00186">
    <property type="reaction ID" value="UER00284"/>
</dbReference>
<dbReference type="Proteomes" id="UP000006732">
    <property type="component" value="Chromosome"/>
</dbReference>
<dbReference type="GO" id="GO:0008792">
    <property type="term" value="F:arginine decarboxylase activity"/>
    <property type="evidence" value="ECO:0007669"/>
    <property type="project" value="UniProtKB-UniRule"/>
</dbReference>
<dbReference type="GO" id="GO:0046872">
    <property type="term" value="F:metal ion binding"/>
    <property type="evidence" value="ECO:0007669"/>
    <property type="project" value="UniProtKB-KW"/>
</dbReference>
<dbReference type="GO" id="GO:0006527">
    <property type="term" value="P:arginine catabolic process"/>
    <property type="evidence" value="ECO:0007669"/>
    <property type="project" value="InterPro"/>
</dbReference>
<dbReference type="GO" id="GO:0033388">
    <property type="term" value="P:putrescine biosynthetic process from arginine"/>
    <property type="evidence" value="ECO:0007669"/>
    <property type="project" value="TreeGrafter"/>
</dbReference>
<dbReference type="GO" id="GO:0008295">
    <property type="term" value="P:spermidine biosynthetic process"/>
    <property type="evidence" value="ECO:0007669"/>
    <property type="project" value="UniProtKB-UniRule"/>
</dbReference>
<dbReference type="CDD" id="cd06830">
    <property type="entry name" value="PLPDE_III_ADC"/>
    <property type="match status" value="1"/>
</dbReference>
<dbReference type="FunFam" id="1.20.58.930:FF:000002">
    <property type="entry name" value="Biosynthetic arginine decarboxylase"/>
    <property type="match status" value="1"/>
</dbReference>
<dbReference type="Gene3D" id="1.10.287.3440">
    <property type="match status" value="1"/>
</dbReference>
<dbReference type="Gene3D" id="1.20.58.930">
    <property type="match status" value="1"/>
</dbReference>
<dbReference type="Gene3D" id="3.20.20.10">
    <property type="entry name" value="Alanine racemase"/>
    <property type="match status" value="1"/>
</dbReference>
<dbReference type="Gene3D" id="2.40.37.10">
    <property type="entry name" value="Lyase, Ornithine Decarboxylase, Chain A, domain 1"/>
    <property type="match status" value="1"/>
</dbReference>
<dbReference type="HAMAP" id="MF_01417">
    <property type="entry name" value="SpeA"/>
    <property type="match status" value="1"/>
</dbReference>
<dbReference type="InterPro" id="IPR009006">
    <property type="entry name" value="Ala_racemase/Decarboxylase_C"/>
</dbReference>
<dbReference type="InterPro" id="IPR040634">
    <property type="entry name" value="Arg_decarb_HB"/>
</dbReference>
<dbReference type="InterPro" id="IPR041128">
    <property type="entry name" value="Arg_decarbox_C"/>
</dbReference>
<dbReference type="InterPro" id="IPR002985">
    <property type="entry name" value="Arg_decrbxlase"/>
</dbReference>
<dbReference type="InterPro" id="IPR022657">
    <property type="entry name" value="De-COase2_CS"/>
</dbReference>
<dbReference type="InterPro" id="IPR022644">
    <property type="entry name" value="De-COase2_N"/>
</dbReference>
<dbReference type="InterPro" id="IPR022653">
    <property type="entry name" value="De-COase2_pyr-phos_BS"/>
</dbReference>
<dbReference type="InterPro" id="IPR000183">
    <property type="entry name" value="Orn/DAP/Arg_de-COase"/>
</dbReference>
<dbReference type="InterPro" id="IPR029066">
    <property type="entry name" value="PLP-binding_barrel"/>
</dbReference>
<dbReference type="NCBIfam" id="NF003763">
    <property type="entry name" value="PRK05354.1"/>
    <property type="match status" value="1"/>
</dbReference>
<dbReference type="NCBIfam" id="TIGR01273">
    <property type="entry name" value="speA"/>
    <property type="match status" value="1"/>
</dbReference>
<dbReference type="PANTHER" id="PTHR43295">
    <property type="entry name" value="ARGININE DECARBOXYLASE"/>
    <property type="match status" value="1"/>
</dbReference>
<dbReference type="PANTHER" id="PTHR43295:SF9">
    <property type="entry name" value="BIOSYNTHETIC ARGININE DECARBOXYLASE"/>
    <property type="match status" value="1"/>
</dbReference>
<dbReference type="Pfam" id="PF17810">
    <property type="entry name" value="Arg_decarb_HB"/>
    <property type="match status" value="1"/>
</dbReference>
<dbReference type="Pfam" id="PF17944">
    <property type="entry name" value="Arg_decarbox_C"/>
    <property type="match status" value="1"/>
</dbReference>
<dbReference type="Pfam" id="PF02784">
    <property type="entry name" value="Orn_Arg_deC_N"/>
    <property type="match status" value="1"/>
</dbReference>
<dbReference type="PIRSF" id="PIRSF001336">
    <property type="entry name" value="Arg_decrbxlase"/>
    <property type="match status" value="1"/>
</dbReference>
<dbReference type="PRINTS" id="PR01180">
    <property type="entry name" value="ARGDCRBXLASE"/>
</dbReference>
<dbReference type="PRINTS" id="PR01179">
    <property type="entry name" value="ODADCRBXLASE"/>
</dbReference>
<dbReference type="SUPFAM" id="SSF50621">
    <property type="entry name" value="Alanine racemase C-terminal domain-like"/>
    <property type="match status" value="1"/>
</dbReference>
<dbReference type="SUPFAM" id="SSF51419">
    <property type="entry name" value="PLP-binding barrel"/>
    <property type="match status" value="1"/>
</dbReference>
<dbReference type="PROSITE" id="PS00878">
    <property type="entry name" value="ODR_DC_2_1"/>
    <property type="match status" value="1"/>
</dbReference>
<dbReference type="PROSITE" id="PS00879">
    <property type="entry name" value="ODR_DC_2_2"/>
    <property type="match status" value="1"/>
</dbReference>
<gene>
    <name evidence="1" type="primary">speA</name>
    <name type="ordered locus">Ppro_2606</name>
</gene>
<keyword id="KW-0210">Decarboxylase</keyword>
<keyword id="KW-0456">Lyase</keyword>
<keyword id="KW-0460">Magnesium</keyword>
<keyword id="KW-0479">Metal-binding</keyword>
<keyword id="KW-0620">Polyamine biosynthesis</keyword>
<keyword id="KW-0663">Pyridoxal phosphate</keyword>
<keyword id="KW-1185">Reference proteome</keyword>
<keyword id="KW-0745">Spermidine biosynthesis</keyword>
<proteinExistence type="inferred from homology"/>
<accession>A1AS90</accession>
<evidence type="ECO:0000255" key="1">
    <source>
        <dbReference type="HAMAP-Rule" id="MF_01417"/>
    </source>
</evidence>
<sequence length="635" mass="71801">MERWSINDSAKIYNLNNWGGDLFSINKKGNICVHPSPNSKYSIELASLVDDLIKRKIKPPILLRFMNILEGRIASINRVFRNAIQTNNYPAQYQTFYPIKVNQQRQVVEAIANFGKKYNIGLEVGSKPELVAAISISTNNSLPIICNGYKDTEFIETVLYATKIGYNITIVIEKLFELEKVIELSRKTGITPKLGIRVKLSSKGTGKWATSGGEDAKFGLRISEIITAIDLLKQYNLIDSVKLLHSHIGSQVTKIDKIKNALIEGARIYVEMKKLGVNLEYIDIGGGLGVDYDGSKSSYFSSVNYSVEEYANDVIYQIKNICDEAGVDCPNIISESGRATVAHYSVMVTNILNTNTQNQMPDFESILTQAEPLSPTVRKLVDIYKSIDRHSLREDYHDTLQLIQEAVSLFNLGYLNLNDRAMAEWLYTRIIKKINNLVEKMKPVPEELQNFKLSMRQTYFANFSLFQSIPDSWAIDQLFPIMPIQRLGEKPDVIASIADITCDSDGEITSFVGENGRTKYLPLHKIRKNEEYYIGFFLIGAYQEILGDLHNLFGDTNAVHITFNKKTNYRIDTVISGDAIQQSLKYVQYDGNEILKKVRDSLENGVASKKISIEESSHFLELLDKTIQAYTYLGE</sequence>
<feature type="chain" id="PRO_1000068492" description="Biosynthetic arginine decarboxylase">
    <location>
        <begin position="1"/>
        <end position="635"/>
    </location>
</feature>
<feature type="binding site" evidence="1">
    <location>
        <begin position="282"/>
        <end position="292"/>
    </location>
    <ligand>
        <name>substrate</name>
    </ligand>
</feature>
<feature type="modified residue" description="N6-(pyridoxal phosphate)lysine" evidence="1">
    <location>
        <position position="100"/>
    </location>
</feature>
<comment type="function">
    <text evidence="1">Catalyzes the biosynthesis of agmatine from arginine.</text>
</comment>
<comment type="catalytic activity">
    <reaction evidence="1">
        <text>L-arginine + H(+) = agmatine + CO2</text>
        <dbReference type="Rhea" id="RHEA:17641"/>
        <dbReference type="ChEBI" id="CHEBI:15378"/>
        <dbReference type="ChEBI" id="CHEBI:16526"/>
        <dbReference type="ChEBI" id="CHEBI:32682"/>
        <dbReference type="ChEBI" id="CHEBI:58145"/>
        <dbReference type="EC" id="4.1.1.19"/>
    </reaction>
</comment>
<comment type="cofactor">
    <cofactor evidence="1">
        <name>Mg(2+)</name>
        <dbReference type="ChEBI" id="CHEBI:18420"/>
    </cofactor>
</comment>
<comment type="cofactor">
    <cofactor evidence="1">
        <name>pyridoxal 5'-phosphate</name>
        <dbReference type="ChEBI" id="CHEBI:597326"/>
    </cofactor>
</comment>
<comment type="pathway">
    <text evidence="1">Amine and polyamine biosynthesis; agmatine biosynthesis; agmatine from L-arginine: step 1/1.</text>
</comment>
<comment type="similarity">
    <text evidence="1">Belongs to the Orn/Lys/Arg decarboxylase class-II family. SpeA subfamily.</text>
</comment>
<organism>
    <name type="scientific">Pelobacter propionicus (strain DSM 2379 / NBRC 103807 / OttBd1)</name>
    <dbReference type="NCBI Taxonomy" id="338966"/>
    <lineage>
        <taxon>Bacteria</taxon>
        <taxon>Pseudomonadati</taxon>
        <taxon>Thermodesulfobacteriota</taxon>
        <taxon>Desulfuromonadia</taxon>
        <taxon>Desulfuromonadales</taxon>
        <taxon>Desulfuromonadaceae</taxon>
        <taxon>Pelobacter</taxon>
    </lineage>
</organism>
<reference key="1">
    <citation type="submission" date="2006-10" db="EMBL/GenBank/DDBJ databases">
        <title>Complete sequence of chromosome of Pelobacter propionicus DSM 2379.</title>
        <authorList>
            <consortium name="US DOE Joint Genome Institute"/>
            <person name="Copeland A."/>
            <person name="Lucas S."/>
            <person name="Lapidus A."/>
            <person name="Barry K."/>
            <person name="Detter J.C."/>
            <person name="Glavina del Rio T."/>
            <person name="Hammon N."/>
            <person name="Israni S."/>
            <person name="Dalin E."/>
            <person name="Tice H."/>
            <person name="Pitluck S."/>
            <person name="Saunders E."/>
            <person name="Brettin T."/>
            <person name="Bruce D."/>
            <person name="Han C."/>
            <person name="Tapia R."/>
            <person name="Schmutz J."/>
            <person name="Larimer F."/>
            <person name="Land M."/>
            <person name="Hauser L."/>
            <person name="Kyrpides N."/>
            <person name="Kim E."/>
            <person name="Lovley D."/>
            <person name="Richardson P."/>
        </authorList>
    </citation>
    <scope>NUCLEOTIDE SEQUENCE [LARGE SCALE GENOMIC DNA]</scope>
    <source>
        <strain>DSM 2379 / NBRC 103807 / OttBd1</strain>
    </source>
</reference>
<protein>
    <recommendedName>
        <fullName evidence="1">Biosynthetic arginine decarboxylase</fullName>
        <shortName evidence="1">ADC</shortName>
        <ecNumber evidence="1">4.1.1.19</ecNumber>
    </recommendedName>
</protein>